<dbReference type="EMBL" id="AM286280">
    <property type="protein sequence ID" value="CAL08652.1"/>
    <property type="molecule type" value="Genomic_DNA"/>
</dbReference>
<dbReference type="SMR" id="Q14II7"/>
<dbReference type="KEGG" id="ftf:FTF0636"/>
<dbReference type="HOGENOM" id="CLU_033732_1_0_6"/>
<dbReference type="GO" id="GO:0005829">
    <property type="term" value="C:cytosol"/>
    <property type="evidence" value="ECO:0007669"/>
    <property type="project" value="TreeGrafter"/>
</dbReference>
<dbReference type="GO" id="GO:0005525">
    <property type="term" value="F:GTP binding"/>
    <property type="evidence" value="ECO:0007669"/>
    <property type="project" value="UniProtKB-UniRule"/>
</dbReference>
<dbReference type="GO" id="GO:0046872">
    <property type="term" value="F:metal ion binding"/>
    <property type="evidence" value="ECO:0007669"/>
    <property type="project" value="UniProtKB-KW"/>
</dbReference>
<dbReference type="GO" id="GO:0000917">
    <property type="term" value="P:division septum assembly"/>
    <property type="evidence" value="ECO:0007669"/>
    <property type="project" value="UniProtKB-KW"/>
</dbReference>
<dbReference type="CDD" id="cd01876">
    <property type="entry name" value="YihA_EngB"/>
    <property type="match status" value="1"/>
</dbReference>
<dbReference type="FunFam" id="3.40.50.300:FF:000098">
    <property type="entry name" value="Probable GTP-binding protein EngB"/>
    <property type="match status" value="1"/>
</dbReference>
<dbReference type="Gene3D" id="3.40.50.300">
    <property type="entry name" value="P-loop containing nucleotide triphosphate hydrolases"/>
    <property type="match status" value="1"/>
</dbReference>
<dbReference type="HAMAP" id="MF_00321">
    <property type="entry name" value="GTPase_EngB"/>
    <property type="match status" value="1"/>
</dbReference>
<dbReference type="InterPro" id="IPR030393">
    <property type="entry name" value="G_ENGB_dom"/>
</dbReference>
<dbReference type="InterPro" id="IPR006073">
    <property type="entry name" value="GTP-bd"/>
</dbReference>
<dbReference type="InterPro" id="IPR019987">
    <property type="entry name" value="GTP-bd_ribosome_bio_YsxC"/>
</dbReference>
<dbReference type="InterPro" id="IPR027417">
    <property type="entry name" value="P-loop_NTPase"/>
</dbReference>
<dbReference type="NCBIfam" id="TIGR03598">
    <property type="entry name" value="GTPase_YsxC"/>
    <property type="match status" value="1"/>
</dbReference>
<dbReference type="PANTHER" id="PTHR11649:SF13">
    <property type="entry name" value="ENGB-TYPE G DOMAIN-CONTAINING PROTEIN"/>
    <property type="match status" value="1"/>
</dbReference>
<dbReference type="PANTHER" id="PTHR11649">
    <property type="entry name" value="MSS1/TRME-RELATED GTP-BINDING PROTEIN"/>
    <property type="match status" value="1"/>
</dbReference>
<dbReference type="Pfam" id="PF01926">
    <property type="entry name" value="MMR_HSR1"/>
    <property type="match status" value="1"/>
</dbReference>
<dbReference type="SUPFAM" id="SSF52540">
    <property type="entry name" value="P-loop containing nucleoside triphosphate hydrolases"/>
    <property type="match status" value="1"/>
</dbReference>
<dbReference type="PROSITE" id="PS51706">
    <property type="entry name" value="G_ENGB"/>
    <property type="match status" value="1"/>
</dbReference>
<organism>
    <name type="scientific">Francisella tularensis subsp. tularensis (strain FSC 198)</name>
    <dbReference type="NCBI Taxonomy" id="393115"/>
    <lineage>
        <taxon>Bacteria</taxon>
        <taxon>Pseudomonadati</taxon>
        <taxon>Pseudomonadota</taxon>
        <taxon>Gammaproteobacteria</taxon>
        <taxon>Thiotrichales</taxon>
        <taxon>Francisellaceae</taxon>
        <taxon>Francisella</taxon>
    </lineage>
</organism>
<name>ENGB_FRAT1</name>
<sequence>MNYSKAKYIMGAAKVSQLPEDTGVEVAFAGRSNAGKSSALNTLTDQKGLARVSKTPGRTQLINLFDLGNNNRLVDLPGYGYAKVSESIKRQWQSEMENYLTSRKCLNGIVLLVDLRHELKEFDSLMIEMAISFDLNLHILLTKADKLNNKERAQANRMIESFLKTFVSTDKISYQLFSSLTKMGLDKFKEKLDTWYQ</sequence>
<comment type="function">
    <text evidence="1">Necessary for normal cell division and for the maintenance of normal septation.</text>
</comment>
<comment type="cofactor">
    <cofactor evidence="1">
        <name>Mg(2+)</name>
        <dbReference type="ChEBI" id="CHEBI:18420"/>
    </cofactor>
</comment>
<comment type="similarity">
    <text evidence="1">Belongs to the TRAFAC class TrmE-Era-EngA-EngB-Septin-like GTPase superfamily. EngB GTPase family.</text>
</comment>
<protein>
    <recommendedName>
        <fullName evidence="1">Probable GTP-binding protein EngB</fullName>
    </recommendedName>
</protein>
<keyword id="KW-0131">Cell cycle</keyword>
<keyword id="KW-0132">Cell division</keyword>
<keyword id="KW-0342">GTP-binding</keyword>
<keyword id="KW-0460">Magnesium</keyword>
<keyword id="KW-0479">Metal-binding</keyword>
<keyword id="KW-0547">Nucleotide-binding</keyword>
<keyword id="KW-0717">Septation</keyword>
<proteinExistence type="inferred from homology"/>
<reference key="1">
    <citation type="journal article" date="2007" name="PLoS ONE">
        <title>Genome sequencing shows that European isolates of Francisella tularensis subspecies tularensis are almost identical to US laboratory strain Schu S4.</title>
        <authorList>
            <person name="Chaudhuri R.R."/>
            <person name="Ren C.-P."/>
            <person name="Desmond L."/>
            <person name="Vincent G.A."/>
            <person name="Silman N.J."/>
            <person name="Brehm J.K."/>
            <person name="Elmore M.J."/>
            <person name="Hudson M.J."/>
            <person name="Forsman M."/>
            <person name="Isherwood K.E."/>
            <person name="Gurycova D."/>
            <person name="Minton N.P."/>
            <person name="Titball R.W."/>
            <person name="Pallen M.J."/>
            <person name="Vipond R."/>
        </authorList>
    </citation>
    <scope>NUCLEOTIDE SEQUENCE [LARGE SCALE GENOMIC DNA]</scope>
    <source>
        <strain>FSC 198</strain>
    </source>
</reference>
<gene>
    <name evidence="1" type="primary">engB</name>
    <name type="ordered locus">FTF0636</name>
</gene>
<accession>Q14II7</accession>
<feature type="chain" id="PRO_0000266865" description="Probable GTP-binding protein EngB">
    <location>
        <begin position="1"/>
        <end position="197"/>
    </location>
</feature>
<feature type="domain" description="EngB-type G" evidence="1">
    <location>
        <begin position="22"/>
        <end position="197"/>
    </location>
</feature>
<feature type="binding site" evidence="1">
    <location>
        <begin position="30"/>
        <end position="37"/>
    </location>
    <ligand>
        <name>GTP</name>
        <dbReference type="ChEBI" id="CHEBI:37565"/>
    </ligand>
</feature>
<feature type="binding site" evidence="1">
    <location>
        <position position="37"/>
    </location>
    <ligand>
        <name>Mg(2+)</name>
        <dbReference type="ChEBI" id="CHEBI:18420"/>
    </ligand>
</feature>
<feature type="binding site" evidence="1">
    <location>
        <begin position="57"/>
        <end position="61"/>
    </location>
    <ligand>
        <name>GTP</name>
        <dbReference type="ChEBI" id="CHEBI:37565"/>
    </ligand>
</feature>
<feature type="binding site" evidence="1">
    <location>
        <position position="59"/>
    </location>
    <ligand>
        <name>Mg(2+)</name>
        <dbReference type="ChEBI" id="CHEBI:18420"/>
    </ligand>
</feature>
<feature type="binding site" evidence="1">
    <location>
        <begin position="75"/>
        <end position="78"/>
    </location>
    <ligand>
        <name>GTP</name>
        <dbReference type="ChEBI" id="CHEBI:37565"/>
    </ligand>
</feature>
<feature type="binding site" evidence="1">
    <location>
        <begin position="142"/>
        <end position="145"/>
    </location>
    <ligand>
        <name>GTP</name>
        <dbReference type="ChEBI" id="CHEBI:37565"/>
    </ligand>
</feature>
<feature type="binding site" evidence="1">
    <location>
        <begin position="177"/>
        <end position="179"/>
    </location>
    <ligand>
        <name>GTP</name>
        <dbReference type="ChEBI" id="CHEBI:37565"/>
    </ligand>
</feature>
<evidence type="ECO:0000255" key="1">
    <source>
        <dbReference type="HAMAP-Rule" id="MF_00321"/>
    </source>
</evidence>